<reference key="1">
    <citation type="journal article" date="2007" name="J. Pept. Sci.">
        <title>Diversity of the O-superfamily conotoxins from Conus miles.</title>
        <authorList>
            <person name="Luo S."/>
            <person name="Zhangsun D."/>
            <person name="Feng J."/>
            <person name="Wu Y."/>
            <person name="Zhu X."/>
            <person name="Hu Y."/>
        </authorList>
    </citation>
    <scope>NUCLEOTIDE SEQUENCE [MRNA]</scope>
    <source>
        <tissue>Venom duct</tissue>
    </source>
</reference>
<evidence type="ECO:0000250" key="1"/>
<evidence type="ECO:0000255" key="2"/>
<evidence type="ECO:0000305" key="3"/>
<proteinExistence type="evidence at transcript level"/>
<protein>
    <recommendedName>
        <fullName>Conotoxin MiEr92</fullName>
    </recommendedName>
</protein>
<accession>Q3YEE3</accession>
<dbReference type="EMBL" id="DQ141170">
    <property type="protein sequence ID" value="AAZ83769.1"/>
    <property type="molecule type" value="mRNA"/>
</dbReference>
<dbReference type="ConoServer" id="1124">
    <property type="toxin name" value="MiEr92 precursor"/>
</dbReference>
<dbReference type="GO" id="GO:0005576">
    <property type="term" value="C:extracellular region"/>
    <property type="evidence" value="ECO:0007669"/>
    <property type="project" value="UniProtKB-SubCell"/>
</dbReference>
<dbReference type="GO" id="GO:0008200">
    <property type="term" value="F:ion channel inhibitor activity"/>
    <property type="evidence" value="ECO:0007669"/>
    <property type="project" value="InterPro"/>
</dbReference>
<dbReference type="GO" id="GO:0090729">
    <property type="term" value="F:toxin activity"/>
    <property type="evidence" value="ECO:0007669"/>
    <property type="project" value="UniProtKB-KW"/>
</dbReference>
<dbReference type="InterPro" id="IPR004214">
    <property type="entry name" value="Conotoxin"/>
</dbReference>
<dbReference type="Pfam" id="PF02950">
    <property type="entry name" value="Conotoxin"/>
    <property type="match status" value="1"/>
</dbReference>
<comment type="subcellular location">
    <subcellularLocation>
        <location evidence="1">Secreted</location>
    </subcellularLocation>
</comment>
<comment type="tissue specificity">
    <text>Expressed by the venom duct.</text>
</comment>
<comment type="domain">
    <text evidence="1">The presence of a 'disulfide through disulfide knot' structurally defines this protein as a knottin.</text>
</comment>
<comment type="domain">
    <text>The cysteine framework is VI/VII (C-C-CC-C-C).</text>
</comment>
<comment type="similarity">
    <text evidence="3">Belongs to the conotoxin O1 superfamily.</text>
</comment>
<name>O162_CONMI</name>
<feature type="signal peptide" evidence="2">
    <location>
        <begin position="1"/>
        <end position="22"/>
    </location>
</feature>
<feature type="propeptide" id="PRO_0000273433" evidence="1">
    <location>
        <begin position="23"/>
        <end position="49"/>
    </location>
</feature>
<feature type="peptide" id="PRO_0000273434" description="Conotoxin MiEr92">
    <location>
        <begin position="51"/>
        <end position="83"/>
    </location>
</feature>
<feature type="disulfide bond" evidence="1">
    <location>
        <begin position="52"/>
        <end position="67"/>
    </location>
</feature>
<feature type="disulfide bond" evidence="1">
    <location>
        <begin position="59"/>
        <end position="72"/>
    </location>
</feature>
<feature type="disulfide bond" evidence="1">
    <location>
        <begin position="66"/>
        <end position="81"/>
    </location>
</feature>
<keyword id="KW-1015">Disulfide bond</keyword>
<keyword id="KW-0960">Knottin</keyword>
<keyword id="KW-0528">Neurotoxin</keyword>
<keyword id="KW-0964">Secreted</keyword>
<keyword id="KW-0732">Signal</keyword>
<keyword id="KW-0800">Toxin</keyword>
<organism>
    <name type="scientific">Conus miles</name>
    <name type="common">Soldier cone</name>
    <name type="synonym">Mile cone</name>
    <dbReference type="NCBI Taxonomy" id="69564"/>
    <lineage>
        <taxon>Eukaryota</taxon>
        <taxon>Metazoa</taxon>
        <taxon>Spiralia</taxon>
        <taxon>Lophotrochozoa</taxon>
        <taxon>Mollusca</taxon>
        <taxon>Gastropoda</taxon>
        <taxon>Caenogastropoda</taxon>
        <taxon>Neogastropoda</taxon>
        <taxon>Conoidea</taxon>
        <taxon>Conidae</taxon>
        <taxon>Conus</taxon>
        <taxon>Rhizoconus</taxon>
    </lineage>
</organism>
<sequence>MKLTCVLIVIMLFLTVCPLITADHSRDKQEHPAMRLKDRIRYLRRGKLTRDCKHQNDSCAEEGEECCSDLRCMTSGAGAICVT</sequence>